<evidence type="ECO:0000250" key="1">
    <source>
        <dbReference type="UniProtKB" id="O14929"/>
    </source>
</evidence>
<evidence type="ECO:0000269" key="2">
    <source>
    </source>
</evidence>
<evidence type="ECO:0000305" key="3"/>
<evidence type="ECO:0007744" key="4">
    <source>
    </source>
</evidence>
<sequence>MAALEKFLVEYKSAVEKKLAEYKCNTNTAIELKLVRFPEDLENDIRTFFPEYTHQLFGDDETAFGYKGLKILLYYIAGSLSTLFRVEYSSKVDENFDCVEADDVEGKIRQIIPPGFCTNTNDFLSLLEKETNFKPFGTLLHTYTVPSQTGGETFTFQIHKADMTCRGFREYHERLQTFLMWFIETASFIDVDDERWHYFLVFEKYNKDGATLFATVGYMTVYNYYVYPDKTRPRVSQMLILTPFQGQGHGAQLLETVHRYYISFPTVLDITAEDPSRSYLKLRDFVLVKFCQFLPSFSRERLLQGFSEDMAIQAQQMFKINKQHARRVYEILRLLVTDMSDAEQYRSYRLDIKRRLISPYKKKQRDLAKMKKCLRPEELTNQMNQIEISVQHEQLEERFQELVEDYRRVIERLAQE</sequence>
<name>HAT1_MOUSE</name>
<organism>
    <name type="scientific">Mus musculus</name>
    <name type="common">Mouse</name>
    <dbReference type="NCBI Taxonomy" id="10090"/>
    <lineage>
        <taxon>Eukaryota</taxon>
        <taxon>Metazoa</taxon>
        <taxon>Chordata</taxon>
        <taxon>Craniata</taxon>
        <taxon>Vertebrata</taxon>
        <taxon>Euteleostomi</taxon>
        <taxon>Mammalia</taxon>
        <taxon>Eutheria</taxon>
        <taxon>Euarchontoglires</taxon>
        <taxon>Glires</taxon>
        <taxon>Rodentia</taxon>
        <taxon>Myomorpha</taxon>
        <taxon>Muroidea</taxon>
        <taxon>Muridae</taxon>
        <taxon>Murinae</taxon>
        <taxon>Mus</taxon>
        <taxon>Mus</taxon>
    </lineage>
</organism>
<gene>
    <name type="primary">Hat1</name>
</gene>
<dbReference type="EC" id="2.3.1.48" evidence="1"/>
<dbReference type="EMBL" id="AK041700">
    <property type="protein sequence ID" value="BAC31038.1"/>
    <property type="molecule type" value="mRNA"/>
</dbReference>
<dbReference type="EMBL" id="AK169315">
    <property type="protein sequence ID" value="BAE41070.1"/>
    <property type="molecule type" value="mRNA"/>
</dbReference>
<dbReference type="EMBL" id="BC055460">
    <property type="protein sequence ID" value="AAH55460.1"/>
    <property type="molecule type" value="mRNA"/>
</dbReference>
<dbReference type="CCDS" id="CCDS16114.1"/>
<dbReference type="RefSeq" id="NP_080391.2">
    <property type="nucleotide sequence ID" value="NM_026115.4"/>
</dbReference>
<dbReference type="SMR" id="Q8BY71"/>
<dbReference type="BioGRID" id="223283">
    <property type="interactions" value="8"/>
</dbReference>
<dbReference type="FunCoup" id="Q8BY71">
    <property type="interactions" value="3301"/>
</dbReference>
<dbReference type="IntAct" id="Q8BY71">
    <property type="interactions" value="5"/>
</dbReference>
<dbReference type="STRING" id="10090.ENSMUSP00000028408"/>
<dbReference type="GlyGen" id="Q8BY71">
    <property type="glycosylation" value="1 site, 1 O-linked glycan (1 site)"/>
</dbReference>
<dbReference type="iPTMnet" id="Q8BY71"/>
<dbReference type="PhosphoSitePlus" id="Q8BY71"/>
<dbReference type="PaxDb" id="10090-ENSMUSP00000107750"/>
<dbReference type="PeptideAtlas" id="Q8BY71"/>
<dbReference type="ProteomicsDB" id="269715"/>
<dbReference type="Pumba" id="Q8BY71"/>
<dbReference type="Antibodypedia" id="19385">
    <property type="antibodies" value="406 antibodies from 33 providers"/>
</dbReference>
<dbReference type="DNASU" id="107435"/>
<dbReference type="Ensembl" id="ENSMUST00000028408.3">
    <property type="protein sequence ID" value="ENSMUSP00000028408.3"/>
    <property type="gene ID" value="ENSMUSG00000027018.12"/>
</dbReference>
<dbReference type="GeneID" id="107435"/>
<dbReference type="KEGG" id="mmu:107435"/>
<dbReference type="UCSC" id="uc008kap.1">
    <property type="organism name" value="mouse"/>
</dbReference>
<dbReference type="AGR" id="MGI:96013"/>
<dbReference type="CTD" id="8520"/>
<dbReference type="MGI" id="MGI:96013">
    <property type="gene designation" value="Hat1"/>
</dbReference>
<dbReference type="VEuPathDB" id="HostDB:ENSMUSG00000027018"/>
<dbReference type="eggNOG" id="KOG2696">
    <property type="taxonomic scope" value="Eukaryota"/>
</dbReference>
<dbReference type="GeneTree" id="ENSGT00390000007069"/>
<dbReference type="HOGENOM" id="CLU_036024_0_0_1"/>
<dbReference type="InParanoid" id="Q8BY71"/>
<dbReference type="OrthoDB" id="17992at9989"/>
<dbReference type="Reactome" id="R-MMU-3214847">
    <property type="pathway name" value="HATs acetylate histones"/>
</dbReference>
<dbReference type="BioGRID-ORCS" id="107435">
    <property type="hits" value="7 hits in 84 CRISPR screens"/>
</dbReference>
<dbReference type="ChiTaRS" id="Hat1">
    <property type="organism name" value="mouse"/>
</dbReference>
<dbReference type="PRO" id="PR:Q8BY71"/>
<dbReference type="Proteomes" id="UP000000589">
    <property type="component" value="Chromosome 2"/>
</dbReference>
<dbReference type="RNAct" id="Q8BY71">
    <property type="molecule type" value="protein"/>
</dbReference>
<dbReference type="Bgee" id="ENSMUSG00000027018">
    <property type="expression patterns" value="Expressed in spermatid and 264 other cell types or tissues"/>
</dbReference>
<dbReference type="ExpressionAtlas" id="Q8BY71">
    <property type="expression patterns" value="baseline and differential"/>
</dbReference>
<dbReference type="GO" id="GO:0000781">
    <property type="term" value="C:chromosome, telomeric region"/>
    <property type="evidence" value="ECO:0007669"/>
    <property type="project" value="GOC"/>
</dbReference>
<dbReference type="GO" id="GO:0005739">
    <property type="term" value="C:mitochondrion"/>
    <property type="evidence" value="ECO:0007669"/>
    <property type="project" value="UniProtKB-SubCell"/>
</dbReference>
<dbReference type="GO" id="GO:0016363">
    <property type="term" value="C:nuclear matrix"/>
    <property type="evidence" value="ECO:0007669"/>
    <property type="project" value="UniProtKB-SubCell"/>
</dbReference>
<dbReference type="GO" id="GO:0042393">
    <property type="term" value="F:histone binding"/>
    <property type="evidence" value="ECO:0007669"/>
    <property type="project" value="InterPro"/>
</dbReference>
<dbReference type="GO" id="GO:0043997">
    <property type="term" value="F:histone H4K12 acetyltransferase activity"/>
    <property type="evidence" value="ECO:0000250"/>
    <property type="project" value="UniProtKB"/>
</dbReference>
<dbReference type="GO" id="GO:0031509">
    <property type="term" value="P:subtelomeric heterochromatin formation"/>
    <property type="evidence" value="ECO:0007669"/>
    <property type="project" value="InterPro"/>
</dbReference>
<dbReference type="FunFam" id="1.10.10.390:FF:000001">
    <property type="entry name" value="Histone acetyltransferase type B catalytic subunit"/>
    <property type="match status" value="1"/>
</dbReference>
<dbReference type="FunFam" id="3.90.360.10:FF:000001">
    <property type="entry name" value="Histone acetyltransferase type B catalytic subunit"/>
    <property type="match status" value="1"/>
</dbReference>
<dbReference type="Gene3D" id="1.10.10.390">
    <property type="match status" value="1"/>
</dbReference>
<dbReference type="Gene3D" id="3.40.630.30">
    <property type="match status" value="1"/>
</dbReference>
<dbReference type="Gene3D" id="3.90.360.10">
    <property type="entry name" value="Histone acetyl transferase 1 (HAT1), N-terminal domain"/>
    <property type="match status" value="1"/>
</dbReference>
<dbReference type="InterPro" id="IPR016181">
    <property type="entry name" value="Acyl_CoA_acyltransferase"/>
</dbReference>
<dbReference type="InterPro" id="IPR048776">
    <property type="entry name" value="HAT1_C"/>
</dbReference>
<dbReference type="InterPro" id="IPR019467">
    <property type="entry name" value="Hat1_N"/>
</dbReference>
<dbReference type="InterPro" id="IPR037113">
    <property type="entry name" value="Hat1_N_sf"/>
</dbReference>
<dbReference type="InterPro" id="IPR017380">
    <property type="entry name" value="Hist_AcTrfase_B-typ_cat-su"/>
</dbReference>
<dbReference type="InterPro" id="IPR013523">
    <property type="entry name" value="Hist_AcTrfase_HAT1_C"/>
</dbReference>
<dbReference type="PANTHER" id="PTHR12046">
    <property type="entry name" value="HISTONE ACETYLTRANSFERASE TYPE B CATALYTIC SUBUNIT"/>
    <property type="match status" value="1"/>
</dbReference>
<dbReference type="Pfam" id="PF21183">
    <property type="entry name" value="HAT1_C"/>
    <property type="match status" value="1"/>
</dbReference>
<dbReference type="Pfam" id="PF10394">
    <property type="entry name" value="Hat1_N"/>
    <property type="match status" value="1"/>
</dbReference>
<dbReference type="PIRSF" id="PIRSF038084">
    <property type="entry name" value="HAT-B_cat"/>
    <property type="match status" value="1"/>
</dbReference>
<dbReference type="SUPFAM" id="SSF55729">
    <property type="entry name" value="Acyl-CoA N-acyltransferases (Nat)"/>
    <property type="match status" value="1"/>
</dbReference>
<protein>
    <recommendedName>
        <fullName>Histone acetyltransferase type B catalytic subunit</fullName>
        <ecNumber evidence="1">2.3.1.48</ecNumber>
    </recommendedName>
    <alternativeName>
        <fullName>Histone acetyltransferase 1</fullName>
    </alternativeName>
</protein>
<accession>Q8BY71</accession>
<proteinExistence type="evidence at protein level"/>
<feature type="initiator methionine" description="Removed" evidence="4">
    <location>
        <position position="1"/>
    </location>
</feature>
<feature type="chain" id="PRO_0000227729" description="Histone acetyltransferase type B catalytic subunit">
    <location>
        <begin position="2"/>
        <end position="416"/>
    </location>
</feature>
<feature type="region of interest" description="Interaction with histone H4 N-terminus" evidence="1">
    <location>
        <begin position="59"/>
        <end position="61"/>
    </location>
</feature>
<feature type="region of interest" description="Interaction with histone H4 N-terminus" evidence="1">
    <location>
        <begin position="222"/>
        <end position="224"/>
    </location>
</feature>
<feature type="active site" description="Proton donor/acceptor" evidence="1">
    <location>
        <position position="273"/>
    </location>
</feature>
<feature type="binding site" evidence="1">
    <location>
        <begin position="238"/>
        <end position="240"/>
    </location>
    <ligand>
        <name>acetyl-CoA</name>
        <dbReference type="ChEBI" id="CHEBI:57288"/>
    </ligand>
</feature>
<feature type="binding site" evidence="1">
    <location>
        <begin position="245"/>
        <end position="251"/>
    </location>
    <ligand>
        <name>acetyl-CoA</name>
        <dbReference type="ChEBI" id="CHEBI:57288"/>
    </ligand>
</feature>
<feature type="site" description="Interaction with histone H4 N-terminus" evidence="1">
    <location>
        <position position="196"/>
    </location>
</feature>
<feature type="modified residue" description="N-acetylalanine" evidence="4">
    <location>
        <position position="2"/>
    </location>
</feature>
<feature type="modified residue" description="N6-acetyllysine" evidence="4">
    <location>
        <position position="6"/>
    </location>
</feature>
<feature type="modified residue" description="N6-acetyllysine" evidence="4">
    <location>
        <position position="12"/>
    </location>
</feature>
<feature type="modified residue" description="Phosphoserine" evidence="1">
    <location>
        <position position="187"/>
    </location>
</feature>
<feature type="modified residue" description="Phosphoserine" evidence="1">
    <location>
        <position position="340"/>
    </location>
</feature>
<keyword id="KW-0007">Acetylation</keyword>
<keyword id="KW-0012">Acyltransferase</keyword>
<keyword id="KW-0496">Mitochondrion</keyword>
<keyword id="KW-0539">Nucleus</keyword>
<keyword id="KW-0597">Phosphoprotein</keyword>
<keyword id="KW-1185">Reference proteome</keyword>
<keyword id="KW-0808">Transferase</keyword>
<comment type="function">
    <text evidence="1 2">Histone acetyltransferase that plays a role in different biological processes including cell cycle progression, glucose metabolism, histone production or DNA damage repair (PubMed:23754951). Coordinates histone production and acetylation via H4 promoter binding. Acetylates histone H4 at 'Lys-5' (H4K5ac) and 'Lys-12' (H4K12ac) and, to a lesser extent, histone H2A at 'Lys-5' (H2AK5ac). Drives H4 production by chromatin binding to support chromatin replication and acetylation (PubMed:23754951). Since transcription of H4 genes is tightly coupled to S-phase, plays an important role in S-phase entry and progression. Promotes homologous recombination in DNA repair by facilitating histone turnover and incorporation of acetylated H3.3 at sites of double-strand breaks (PubMed:23754951). In addition, acetylates other substrates such as chromatin-related proteins. Also acetylates RSAD2 which mediates the interaction of ubiquitin ligase UBE4A with RSAD2 leading to RSAD2 ubiquitination and subsequent degradation (By similarity).</text>
</comment>
<comment type="catalytic activity">
    <reaction evidence="1">
        <text>L-lysyl-[protein] + acetyl-CoA = N(6)-acetyl-L-lysyl-[protein] + CoA + H(+)</text>
        <dbReference type="Rhea" id="RHEA:45948"/>
        <dbReference type="Rhea" id="RHEA-COMP:9752"/>
        <dbReference type="Rhea" id="RHEA-COMP:10731"/>
        <dbReference type="ChEBI" id="CHEBI:15378"/>
        <dbReference type="ChEBI" id="CHEBI:29969"/>
        <dbReference type="ChEBI" id="CHEBI:57287"/>
        <dbReference type="ChEBI" id="CHEBI:57288"/>
        <dbReference type="ChEBI" id="CHEBI:61930"/>
        <dbReference type="EC" id="2.3.1.48"/>
    </reaction>
</comment>
<comment type="subunit">
    <text evidence="1">Catalytic subunit of the type B histone acetyltransferase (HAT) complex, composed of RBBP7 and HAT1. Interacts with histones H4 and H2A. The interaction is dependent of the ability of RBBP7 to bind to the N-terminus of histones. Component of the histone H3.1 and H3.3 complexes.</text>
</comment>
<comment type="subcellular location">
    <subcellularLocation>
        <location evidence="1">Nucleus matrix</location>
    </subcellularLocation>
    <subcellularLocation>
        <location evidence="1">Mitochondrion</location>
    </subcellularLocation>
</comment>
<comment type="PTM">
    <text evidence="1">Phosphorylated by AMPK at Ser-187; phosphorylation increases HAT1 activity.</text>
</comment>
<comment type="disruption phenotype">
    <text evidence="2">Homozygous deletion of HAT1 results in neonatal lethality but survival to at least late embryogenesis. The structure of the vertebrae in the neonates degenerates near the base of the spinal column.</text>
</comment>
<comment type="similarity">
    <text evidence="3">Belongs to the HAT1 family.</text>
</comment>
<reference key="1">
    <citation type="journal article" date="2005" name="Science">
        <title>The transcriptional landscape of the mammalian genome.</title>
        <authorList>
            <person name="Carninci P."/>
            <person name="Kasukawa T."/>
            <person name="Katayama S."/>
            <person name="Gough J."/>
            <person name="Frith M.C."/>
            <person name="Maeda N."/>
            <person name="Oyama R."/>
            <person name="Ravasi T."/>
            <person name="Lenhard B."/>
            <person name="Wells C."/>
            <person name="Kodzius R."/>
            <person name="Shimokawa K."/>
            <person name="Bajic V.B."/>
            <person name="Brenner S.E."/>
            <person name="Batalov S."/>
            <person name="Forrest A.R."/>
            <person name="Zavolan M."/>
            <person name="Davis M.J."/>
            <person name="Wilming L.G."/>
            <person name="Aidinis V."/>
            <person name="Allen J.E."/>
            <person name="Ambesi-Impiombato A."/>
            <person name="Apweiler R."/>
            <person name="Aturaliya R.N."/>
            <person name="Bailey T.L."/>
            <person name="Bansal M."/>
            <person name="Baxter L."/>
            <person name="Beisel K.W."/>
            <person name="Bersano T."/>
            <person name="Bono H."/>
            <person name="Chalk A.M."/>
            <person name="Chiu K.P."/>
            <person name="Choudhary V."/>
            <person name="Christoffels A."/>
            <person name="Clutterbuck D.R."/>
            <person name="Crowe M.L."/>
            <person name="Dalla E."/>
            <person name="Dalrymple B.P."/>
            <person name="de Bono B."/>
            <person name="Della Gatta G."/>
            <person name="di Bernardo D."/>
            <person name="Down T."/>
            <person name="Engstrom P."/>
            <person name="Fagiolini M."/>
            <person name="Faulkner G."/>
            <person name="Fletcher C.F."/>
            <person name="Fukushima T."/>
            <person name="Furuno M."/>
            <person name="Futaki S."/>
            <person name="Gariboldi M."/>
            <person name="Georgii-Hemming P."/>
            <person name="Gingeras T.R."/>
            <person name="Gojobori T."/>
            <person name="Green R.E."/>
            <person name="Gustincich S."/>
            <person name="Harbers M."/>
            <person name="Hayashi Y."/>
            <person name="Hensch T.K."/>
            <person name="Hirokawa N."/>
            <person name="Hill D."/>
            <person name="Huminiecki L."/>
            <person name="Iacono M."/>
            <person name="Ikeo K."/>
            <person name="Iwama A."/>
            <person name="Ishikawa T."/>
            <person name="Jakt M."/>
            <person name="Kanapin A."/>
            <person name="Katoh M."/>
            <person name="Kawasawa Y."/>
            <person name="Kelso J."/>
            <person name="Kitamura H."/>
            <person name="Kitano H."/>
            <person name="Kollias G."/>
            <person name="Krishnan S.P."/>
            <person name="Kruger A."/>
            <person name="Kummerfeld S.K."/>
            <person name="Kurochkin I.V."/>
            <person name="Lareau L.F."/>
            <person name="Lazarevic D."/>
            <person name="Lipovich L."/>
            <person name="Liu J."/>
            <person name="Liuni S."/>
            <person name="McWilliam S."/>
            <person name="Madan Babu M."/>
            <person name="Madera M."/>
            <person name="Marchionni L."/>
            <person name="Matsuda H."/>
            <person name="Matsuzawa S."/>
            <person name="Miki H."/>
            <person name="Mignone F."/>
            <person name="Miyake S."/>
            <person name="Morris K."/>
            <person name="Mottagui-Tabar S."/>
            <person name="Mulder N."/>
            <person name="Nakano N."/>
            <person name="Nakauchi H."/>
            <person name="Ng P."/>
            <person name="Nilsson R."/>
            <person name="Nishiguchi S."/>
            <person name="Nishikawa S."/>
            <person name="Nori F."/>
            <person name="Ohara O."/>
            <person name="Okazaki Y."/>
            <person name="Orlando V."/>
            <person name="Pang K.C."/>
            <person name="Pavan W.J."/>
            <person name="Pavesi G."/>
            <person name="Pesole G."/>
            <person name="Petrovsky N."/>
            <person name="Piazza S."/>
            <person name="Reed J."/>
            <person name="Reid J.F."/>
            <person name="Ring B.Z."/>
            <person name="Ringwald M."/>
            <person name="Rost B."/>
            <person name="Ruan Y."/>
            <person name="Salzberg S.L."/>
            <person name="Sandelin A."/>
            <person name="Schneider C."/>
            <person name="Schoenbach C."/>
            <person name="Sekiguchi K."/>
            <person name="Semple C.A."/>
            <person name="Seno S."/>
            <person name="Sessa L."/>
            <person name="Sheng Y."/>
            <person name="Shibata Y."/>
            <person name="Shimada H."/>
            <person name="Shimada K."/>
            <person name="Silva D."/>
            <person name="Sinclair B."/>
            <person name="Sperling S."/>
            <person name="Stupka E."/>
            <person name="Sugiura K."/>
            <person name="Sultana R."/>
            <person name="Takenaka Y."/>
            <person name="Taki K."/>
            <person name="Tammoja K."/>
            <person name="Tan S.L."/>
            <person name="Tang S."/>
            <person name="Taylor M.S."/>
            <person name="Tegner J."/>
            <person name="Teichmann S.A."/>
            <person name="Ueda H.R."/>
            <person name="van Nimwegen E."/>
            <person name="Verardo R."/>
            <person name="Wei C.L."/>
            <person name="Yagi K."/>
            <person name="Yamanishi H."/>
            <person name="Zabarovsky E."/>
            <person name="Zhu S."/>
            <person name="Zimmer A."/>
            <person name="Hide W."/>
            <person name="Bult C."/>
            <person name="Grimmond S.M."/>
            <person name="Teasdale R.D."/>
            <person name="Liu E.T."/>
            <person name="Brusic V."/>
            <person name="Quackenbush J."/>
            <person name="Wahlestedt C."/>
            <person name="Mattick J.S."/>
            <person name="Hume D.A."/>
            <person name="Kai C."/>
            <person name="Sasaki D."/>
            <person name="Tomaru Y."/>
            <person name="Fukuda S."/>
            <person name="Kanamori-Katayama M."/>
            <person name="Suzuki M."/>
            <person name="Aoki J."/>
            <person name="Arakawa T."/>
            <person name="Iida J."/>
            <person name="Imamura K."/>
            <person name="Itoh M."/>
            <person name="Kato T."/>
            <person name="Kawaji H."/>
            <person name="Kawagashira N."/>
            <person name="Kawashima T."/>
            <person name="Kojima M."/>
            <person name="Kondo S."/>
            <person name="Konno H."/>
            <person name="Nakano K."/>
            <person name="Ninomiya N."/>
            <person name="Nishio T."/>
            <person name="Okada M."/>
            <person name="Plessy C."/>
            <person name="Shibata K."/>
            <person name="Shiraki T."/>
            <person name="Suzuki S."/>
            <person name="Tagami M."/>
            <person name="Waki K."/>
            <person name="Watahiki A."/>
            <person name="Okamura-Oho Y."/>
            <person name="Suzuki H."/>
            <person name="Kawai J."/>
            <person name="Hayashizaki Y."/>
        </authorList>
    </citation>
    <scope>NUCLEOTIDE SEQUENCE [LARGE SCALE MRNA]</scope>
    <source>
        <strain>C57BL/6J</strain>
        <tissue>Heart</tissue>
        <tissue>Thymus</tissue>
    </source>
</reference>
<reference key="2">
    <citation type="journal article" date="2004" name="Genome Res.">
        <title>The status, quality, and expansion of the NIH full-length cDNA project: the Mammalian Gene Collection (MGC).</title>
        <authorList>
            <consortium name="The MGC Project Team"/>
        </authorList>
    </citation>
    <scope>NUCLEOTIDE SEQUENCE [LARGE SCALE MRNA]</scope>
    <source>
        <strain>FVB/N</strain>
        <tissue>Mammary tumor</tissue>
    </source>
</reference>
<reference key="3">
    <citation type="journal article" date="2010" name="Cell">
        <title>A tissue-specific atlas of mouse protein phosphorylation and expression.</title>
        <authorList>
            <person name="Huttlin E.L."/>
            <person name="Jedrychowski M.P."/>
            <person name="Elias J.E."/>
            <person name="Goswami T."/>
            <person name="Rad R."/>
            <person name="Beausoleil S.A."/>
            <person name="Villen J."/>
            <person name="Haas W."/>
            <person name="Sowa M.E."/>
            <person name="Gygi S.P."/>
        </authorList>
    </citation>
    <scope>IDENTIFICATION BY MASS SPECTROMETRY [LARGE SCALE ANALYSIS]</scope>
    <source>
        <tissue>Brain</tissue>
        <tissue>Liver</tissue>
        <tissue>Spleen</tissue>
        <tissue>Testis</tissue>
    </source>
</reference>
<reference key="4">
    <citation type="journal article" date="2013" name="Mol. Cell">
        <title>SIRT5-mediated lysine desuccinylation impacts diverse metabolic pathways.</title>
        <authorList>
            <person name="Park J."/>
            <person name="Chen Y."/>
            <person name="Tishkoff D.X."/>
            <person name="Peng C."/>
            <person name="Tan M."/>
            <person name="Dai L."/>
            <person name="Xie Z."/>
            <person name="Zhang Y."/>
            <person name="Zwaans B.M."/>
            <person name="Skinner M.E."/>
            <person name="Lombard D.B."/>
            <person name="Zhao Y."/>
        </authorList>
    </citation>
    <scope>ACETYLATION [LARGE SCALE ANALYSIS] AT ALA-2; LYS-6 AND LYS-12</scope>
    <scope>CLEAVAGE OF INITIATOR METHIONINE [LARGE SCALE ANALYSIS]</scope>
    <scope>IDENTIFICATION BY MASS SPECTROMETRY [LARGE SCALE ANALYSIS]</scope>
    <source>
        <tissue>Embryonic fibroblast</tissue>
    </source>
</reference>
<reference key="5">
    <citation type="journal article" date="2013" name="PLoS Genet.">
        <title>Histone acetyl transferase 1 is essential for mammalian development, genome stability, and the processing of newly synthesized histones H3 and H4.</title>
        <authorList>
            <person name="Nagarajan P."/>
            <person name="Ge Z."/>
            <person name="Sirbu B."/>
            <person name="Doughty C."/>
            <person name="Agudelo Garcia P.A."/>
            <person name="Schlederer M."/>
            <person name="Annunziato A.T."/>
            <person name="Cortez D."/>
            <person name="Kenner L."/>
            <person name="Parthun M.R."/>
        </authorList>
    </citation>
    <scope>FUNCTION</scope>
    <scope>DISRUPTION PHENOTYPE</scope>
</reference>